<proteinExistence type="inferred from homology"/>
<accession>A1UTA5</accession>
<protein>
    <recommendedName>
        <fullName evidence="1">Thymidylate synthase</fullName>
        <shortName evidence="1">TS</shortName>
        <shortName evidence="1">TSase</shortName>
        <ecNumber evidence="1">2.1.1.45</ecNumber>
    </recommendedName>
</protein>
<reference key="1">
    <citation type="submission" date="2006-12" db="EMBL/GenBank/DDBJ databases">
        <authorList>
            <person name="Hendrix L."/>
            <person name="Mohamoud Y."/>
            <person name="Radune D."/>
            <person name="Shvartsbeyn A."/>
            <person name="Daugherty S."/>
            <person name="Dodson R."/>
            <person name="Durkin A.S."/>
            <person name="Harkins D."/>
            <person name="Huot H."/>
            <person name="Kothari S.P."/>
            <person name="Madupu R."/>
            <person name="Li J."/>
            <person name="Nelson W.C."/>
            <person name="Shrivastava S."/>
            <person name="Giglio M.G."/>
            <person name="Haft D."/>
            <person name="Selengut J."/>
            <person name="Fraser-Ligget C."/>
            <person name="Seshadri R."/>
        </authorList>
    </citation>
    <scope>NUCLEOTIDE SEQUENCE [LARGE SCALE GENOMIC DNA]</scope>
    <source>
        <strain>ATCC 35685 / KC583 / Herrer 020/F12,63</strain>
    </source>
</reference>
<evidence type="ECO:0000255" key="1">
    <source>
        <dbReference type="HAMAP-Rule" id="MF_00008"/>
    </source>
</evidence>
<name>TYSY_BARBK</name>
<comment type="function">
    <text evidence="1">Catalyzes the reductive methylation of 2'-deoxyuridine-5'-monophosphate (dUMP) to 2'-deoxythymidine-5'-monophosphate (dTMP) while utilizing 5,10-methylenetetrahydrofolate (mTHF) as the methyl donor and reductant in the reaction, yielding dihydrofolate (DHF) as a by-product. This enzymatic reaction provides an intracellular de novo source of dTMP, an essential precursor for DNA biosynthesis.</text>
</comment>
<comment type="catalytic activity">
    <reaction evidence="1">
        <text>dUMP + (6R)-5,10-methylene-5,6,7,8-tetrahydrofolate = 7,8-dihydrofolate + dTMP</text>
        <dbReference type="Rhea" id="RHEA:12104"/>
        <dbReference type="ChEBI" id="CHEBI:15636"/>
        <dbReference type="ChEBI" id="CHEBI:57451"/>
        <dbReference type="ChEBI" id="CHEBI:63528"/>
        <dbReference type="ChEBI" id="CHEBI:246422"/>
        <dbReference type="EC" id="2.1.1.45"/>
    </reaction>
</comment>
<comment type="pathway">
    <text evidence="1">Pyrimidine metabolism; dTTP biosynthesis.</text>
</comment>
<comment type="subunit">
    <text evidence="1">Homodimer.</text>
</comment>
<comment type="subcellular location">
    <subcellularLocation>
        <location evidence="1">Cytoplasm</location>
    </subcellularLocation>
</comment>
<comment type="similarity">
    <text evidence="1">Belongs to the thymidylate synthase family. Bacterial-type ThyA subfamily.</text>
</comment>
<organism>
    <name type="scientific">Bartonella bacilliformis (strain ATCC 35685 / KC583 / Herrer 020/F12,63)</name>
    <dbReference type="NCBI Taxonomy" id="360095"/>
    <lineage>
        <taxon>Bacteria</taxon>
        <taxon>Pseudomonadati</taxon>
        <taxon>Pseudomonadota</taxon>
        <taxon>Alphaproteobacteria</taxon>
        <taxon>Hyphomicrobiales</taxon>
        <taxon>Bartonellaceae</taxon>
        <taxon>Bartonella</taxon>
    </lineage>
</organism>
<feature type="chain" id="PRO_1000000579" description="Thymidylate synthase">
    <location>
        <begin position="1"/>
        <end position="264"/>
    </location>
</feature>
<feature type="active site" description="Nucleophile" evidence="1">
    <location>
        <position position="146"/>
    </location>
</feature>
<feature type="binding site" description="in other chain" evidence="1">
    <location>
        <position position="21"/>
    </location>
    <ligand>
        <name>dUMP</name>
        <dbReference type="ChEBI" id="CHEBI:246422"/>
        <note>ligand shared between dimeric partners</note>
    </ligand>
</feature>
<feature type="binding site" evidence="1">
    <location>
        <position position="51"/>
    </location>
    <ligand>
        <name>(6R)-5,10-methylene-5,6,7,8-tetrahydrofolate</name>
        <dbReference type="ChEBI" id="CHEBI:15636"/>
    </ligand>
</feature>
<feature type="binding site" evidence="1">
    <location>
        <begin position="126"/>
        <end position="127"/>
    </location>
    <ligand>
        <name>dUMP</name>
        <dbReference type="ChEBI" id="CHEBI:246422"/>
        <note>ligand shared between dimeric partners</note>
    </ligand>
</feature>
<feature type="binding site" description="in other chain" evidence="1">
    <location>
        <begin position="166"/>
        <end position="169"/>
    </location>
    <ligand>
        <name>dUMP</name>
        <dbReference type="ChEBI" id="CHEBI:246422"/>
        <note>ligand shared between dimeric partners</note>
    </ligand>
</feature>
<feature type="binding site" evidence="1">
    <location>
        <position position="169"/>
    </location>
    <ligand>
        <name>(6R)-5,10-methylene-5,6,7,8-tetrahydrofolate</name>
        <dbReference type="ChEBI" id="CHEBI:15636"/>
    </ligand>
</feature>
<feature type="binding site" description="in other chain" evidence="1">
    <location>
        <position position="177"/>
    </location>
    <ligand>
        <name>dUMP</name>
        <dbReference type="ChEBI" id="CHEBI:246422"/>
        <note>ligand shared between dimeric partners</note>
    </ligand>
</feature>
<feature type="binding site" description="in other chain" evidence="1">
    <location>
        <begin position="207"/>
        <end position="209"/>
    </location>
    <ligand>
        <name>dUMP</name>
        <dbReference type="ChEBI" id="CHEBI:246422"/>
        <note>ligand shared between dimeric partners</note>
    </ligand>
</feature>
<feature type="binding site" evidence="1">
    <location>
        <position position="263"/>
    </location>
    <ligand>
        <name>(6R)-5,10-methylene-5,6,7,8-tetrahydrofolate</name>
        <dbReference type="ChEBI" id="CHEBI:15636"/>
    </ligand>
</feature>
<keyword id="KW-0963">Cytoplasm</keyword>
<keyword id="KW-0489">Methyltransferase</keyword>
<keyword id="KW-0545">Nucleotide biosynthesis</keyword>
<keyword id="KW-0808">Transferase</keyword>
<gene>
    <name evidence="1" type="primary">thyA</name>
    <name type="ordered locus">BARBAKC583_0926</name>
</gene>
<sequence length="264" mass="30130">MKAYLDLLSHVLNNGTDRSDRTGVGTRSVFGYQMRFNLQEGFPLLTTKKLHLRSIIYELLWFLKGDTNIAWLKEHGVSIWDEWADKDGNLGPVYGYQWRSWPSSDGRYIDQISNLLAMINHNPNSRRLIVTAWNPALIDEMALPPCHCLFQFQVANGKLSCQLYQRSADIFLGVPFNIASYALLTMMIAQVTGLKVGDFIHTLGDAHLYSNHFEQAKQQLSRTPGILPLIRINPKVTDLFSFQFEDFELLNYEAQPHIKAPVAV</sequence>
<dbReference type="EC" id="2.1.1.45" evidence="1"/>
<dbReference type="EMBL" id="CP000524">
    <property type="protein sequence ID" value="ABM45103.1"/>
    <property type="molecule type" value="Genomic_DNA"/>
</dbReference>
<dbReference type="RefSeq" id="WP_005767388.1">
    <property type="nucleotide sequence ID" value="NC_008783.1"/>
</dbReference>
<dbReference type="SMR" id="A1UTA5"/>
<dbReference type="STRING" id="360095.BARBAKC583_0926"/>
<dbReference type="GeneID" id="4684801"/>
<dbReference type="KEGG" id="bbk:BARBAKC583_0926"/>
<dbReference type="PATRIC" id="fig|360095.6.peg.898"/>
<dbReference type="eggNOG" id="COG0207">
    <property type="taxonomic scope" value="Bacteria"/>
</dbReference>
<dbReference type="HOGENOM" id="CLU_021669_0_0_5"/>
<dbReference type="OrthoDB" id="9774633at2"/>
<dbReference type="UniPathway" id="UPA00575"/>
<dbReference type="Proteomes" id="UP000000643">
    <property type="component" value="Chromosome"/>
</dbReference>
<dbReference type="GO" id="GO:0005829">
    <property type="term" value="C:cytosol"/>
    <property type="evidence" value="ECO:0007669"/>
    <property type="project" value="TreeGrafter"/>
</dbReference>
<dbReference type="GO" id="GO:0004799">
    <property type="term" value="F:thymidylate synthase activity"/>
    <property type="evidence" value="ECO:0007669"/>
    <property type="project" value="UniProtKB-UniRule"/>
</dbReference>
<dbReference type="GO" id="GO:0006231">
    <property type="term" value="P:dTMP biosynthetic process"/>
    <property type="evidence" value="ECO:0007669"/>
    <property type="project" value="UniProtKB-UniRule"/>
</dbReference>
<dbReference type="GO" id="GO:0006235">
    <property type="term" value="P:dTTP biosynthetic process"/>
    <property type="evidence" value="ECO:0007669"/>
    <property type="project" value="UniProtKB-UniRule"/>
</dbReference>
<dbReference type="GO" id="GO:0032259">
    <property type="term" value="P:methylation"/>
    <property type="evidence" value="ECO:0007669"/>
    <property type="project" value="UniProtKB-KW"/>
</dbReference>
<dbReference type="CDD" id="cd00351">
    <property type="entry name" value="TS_Pyrimidine_HMase"/>
    <property type="match status" value="1"/>
</dbReference>
<dbReference type="FunFam" id="3.30.572.10:FF:000001">
    <property type="entry name" value="Thymidylate synthase"/>
    <property type="match status" value="1"/>
</dbReference>
<dbReference type="Gene3D" id="3.30.572.10">
    <property type="entry name" value="Thymidylate synthase/dCMP hydroxymethylase domain"/>
    <property type="match status" value="1"/>
</dbReference>
<dbReference type="HAMAP" id="MF_00008">
    <property type="entry name" value="Thymidy_synth_bact"/>
    <property type="match status" value="1"/>
</dbReference>
<dbReference type="InterPro" id="IPR045097">
    <property type="entry name" value="Thymidate_synth/dCMP_Mease"/>
</dbReference>
<dbReference type="InterPro" id="IPR023451">
    <property type="entry name" value="Thymidate_synth/dCMP_Mease_dom"/>
</dbReference>
<dbReference type="InterPro" id="IPR036926">
    <property type="entry name" value="Thymidate_synth/dCMP_Mease_sf"/>
</dbReference>
<dbReference type="InterPro" id="IPR000398">
    <property type="entry name" value="Thymidylate_synthase"/>
</dbReference>
<dbReference type="InterPro" id="IPR020940">
    <property type="entry name" value="Thymidylate_synthase_AS"/>
</dbReference>
<dbReference type="NCBIfam" id="NF002497">
    <property type="entry name" value="PRK01827.1-3"/>
    <property type="match status" value="1"/>
</dbReference>
<dbReference type="NCBIfam" id="NF002499">
    <property type="entry name" value="PRK01827.1-5"/>
    <property type="match status" value="1"/>
</dbReference>
<dbReference type="NCBIfam" id="TIGR03284">
    <property type="entry name" value="thym_sym"/>
    <property type="match status" value="2"/>
</dbReference>
<dbReference type="PANTHER" id="PTHR11548:SF9">
    <property type="entry name" value="THYMIDYLATE SYNTHASE"/>
    <property type="match status" value="1"/>
</dbReference>
<dbReference type="PANTHER" id="PTHR11548">
    <property type="entry name" value="THYMIDYLATE SYNTHASE 1"/>
    <property type="match status" value="1"/>
</dbReference>
<dbReference type="Pfam" id="PF00303">
    <property type="entry name" value="Thymidylat_synt"/>
    <property type="match status" value="1"/>
</dbReference>
<dbReference type="PRINTS" id="PR00108">
    <property type="entry name" value="THYMDSNTHASE"/>
</dbReference>
<dbReference type="SUPFAM" id="SSF55831">
    <property type="entry name" value="Thymidylate synthase/dCMP hydroxymethylase"/>
    <property type="match status" value="1"/>
</dbReference>
<dbReference type="PROSITE" id="PS00091">
    <property type="entry name" value="THYMIDYLATE_SYNTHASE"/>
    <property type="match status" value="1"/>
</dbReference>